<reference key="1">
    <citation type="submission" date="2006-10" db="EMBL/GenBank/DDBJ databases">
        <authorList>
            <person name="Fleischmann R.D."/>
            <person name="Dodson R.J."/>
            <person name="Haft D.H."/>
            <person name="Merkel J.S."/>
            <person name="Nelson W.C."/>
            <person name="Fraser C.M."/>
        </authorList>
    </citation>
    <scope>NUCLEOTIDE SEQUENCE [LARGE SCALE GENOMIC DNA]</scope>
    <source>
        <strain>ATCC 700084 / mc(2)155</strain>
    </source>
</reference>
<reference key="2">
    <citation type="journal article" date="2007" name="Genome Biol.">
        <title>Interrupted coding sequences in Mycobacterium smegmatis: authentic mutations or sequencing errors?</title>
        <authorList>
            <person name="Deshayes C."/>
            <person name="Perrodou E."/>
            <person name="Gallien S."/>
            <person name="Euphrasie D."/>
            <person name="Schaeffer C."/>
            <person name="Van-Dorsselaer A."/>
            <person name="Poch O."/>
            <person name="Lecompte O."/>
            <person name="Reyrat J.-M."/>
        </authorList>
    </citation>
    <scope>NUCLEOTIDE SEQUENCE [LARGE SCALE GENOMIC DNA]</scope>
    <source>
        <strain>ATCC 700084 / mc(2)155</strain>
    </source>
</reference>
<reference key="3">
    <citation type="journal article" date="2009" name="Genome Res.">
        <title>Ortho-proteogenomics: multiple proteomes investigation through orthology and a new MS-based protocol.</title>
        <authorList>
            <person name="Gallien S."/>
            <person name="Perrodou E."/>
            <person name="Carapito C."/>
            <person name="Deshayes C."/>
            <person name="Reyrat J.-M."/>
            <person name="Van Dorsselaer A."/>
            <person name="Poch O."/>
            <person name="Schaeffer C."/>
            <person name="Lecompte O."/>
        </authorList>
    </citation>
    <scope>NUCLEOTIDE SEQUENCE [LARGE SCALE GENOMIC DNA]</scope>
    <source>
        <strain>ATCC 700084 / mc(2)155</strain>
    </source>
</reference>
<reference key="4">
    <citation type="journal article" date="2008" name="J. Bacteriol.">
        <title>Function of a mycobacterial major facilitator superfamily pump requires a membrane-associated lipoprotein.</title>
        <authorList>
            <person name="Farrow M.F."/>
            <person name="Rubin E.J."/>
        </authorList>
    </citation>
    <scope>FUNCTION</scope>
    <scope>ACTIVITY REGULATION</scope>
    <scope>OPERON STRUCTURE</scope>
    <scope>DISRUPTION PHENOTYPE</scope>
    <source>
        <strain>ATCC 700084 / mc(2)155</strain>
    </source>
</reference>
<reference key="5">
    <citation type="journal article" date="2019" name="Mol. Microbiol.">
        <title>Increased drug permeability of a stiffened mycobacterial outer membrane in cells lacking MFS transporter Rv1410 and lipoprotein LprG.</title>
        <authorList>
            <person name="Hohl M."/>
            <person name="Remm S."/>
            <person name="Eskandarian H.A."/>
            <person name="Dal Molin M."/>
            <person name="Arnold F.M."/>
            <person name="Huerlimann L.M."/>
            <person name="Kruegel A."/>
            <person name="Fantner G.E."/>
            <person name="Sander P."/>
            <person name="Seeger M.A."/>
        </authorList>
    </citation>
    <scope>FUNCTION</scope>
    <scope>OPERON STRUCTURE</scope>
    <scope>DISRUPTION PHENOTYPE</scope>
    <scope>MUTAGENESIS OF ASP-72</scope>
    <source>
        <strain>ATCC 700084 / mc(2)155</strain>
    </source>
</reference>
<protein>
    <recommendedName>
        <fullName evidence="2">Triacylglyceride transporter MSMEG_3069/MSMEI_2992</fullName>
    </recommendedName>
    <alternativeName>
        <fullName evidence="7">MFS-type drug efflux transporter P55</fullName>
    </alternativeName>
</protein>
<dbReference type="EMBL" id="CP000480">
    <property type="protein sequence ID" value="ABK73093.1"/>
    <property type="molecule type" value="Genomic_DNA"/>
</dbReference>
<dbReference type="EMBL" id="CP001663">
    <property type="protein sequence ID" value="AFP39456.1"/>
    <property type="molecule type" value="Genomic_DNA"/>
</dbReference>
<dbReference type="RefSeq" id="YP_887385.1">
    <property type="nucleotide sequence ID" value="NC_008596.1"/>
</dbReference>
<dbReference type="SMR" id="A0QWU7"/>
<dbReference type="STRING" id="246196.MSMEG_3069"/>
<dbReference type="PaxDb" id="246196-MSMEI_2992"/>
<dbReference type="KEGG" id="msg:MSMEI_2992"/>
<dbReference type="KEGG" id="msm:MSMEG_3069"/>
<dbReference type="PATRIC" id="fig|246196.19.peg.3030"/>
<dbReference type="eggNOG" id="COG0477">
    <property type="taxonomic scope" value="Bacteria"/>
</dbReference>
<dbReference type="OrthoDB" id="3453194at2"/>
<dbReference type="Proteomes" id="UP000000757">
    <property type="component" value="Chromosome"/>
</dbReference>
<dbReference type="Proteomes" id="UP000006158">
    <property type="component" value="Chromosome"/>
</dbReference>
<dbReference type="GO" id="GO:0005886">
    <property type="term" value="C:plasma membrane"/>
    <property type="evidence" value="ECO:0007669"/>
    <property type="project" value="UniProtKB-SubCell"/>
</dbReference>
<dbReference type="GO" id="GO:0008289">
    <property type="term" value="F:lipid binding"/>
    <property type="evidence" value="ECO:0007669"/>
    <property type="project" value="UniProtKB-KW"/>
</dbReference>
<dbReference type="GO" id="GO:0022857">
    <property type="term" value="F:transmembrane transporter activity"/>
    <property type="evidence" value="ECO:0007669"/>
    <property type="project" value="InterPro"/>
</dbReference>
<dbReference type="GO" id="GO:0006869">
    <property type="term" value="P:lipid transport"/>
    <property type="evidence" value="ECO:0007669"/>
    <property type="project" value="UniProtKB-KW"/>
</dbReference>
<dbReference type="GO" id="GO:0046677">
    <property type="term" value="P:response to antibiotic"/>
    <property type="evidence" value="ECO:0007669"/>
    <property type="project" value="UniProtKB-KW"/>
</dbReference>
<dbReference type="CDD" id="cd17321">
    <property type="entry name" value="MFS_MMR_MDR_like"/>
    <property type="match status" value="1"/>
</dbReference>
<dbReference type="Gene3D" id="1.20.1250.20">
    <property type="entry name" value="MFS general substrate transporter like domains"/>
    <property type="match status" value="1"/>
</dbReference>
<dbReference type="Gene3D" id="1.20.1720.10">
    <property type="entry name" value="Multidrug resistance protein D"/>
    <property type="match status" value="1"/>
</dbReference>
<dbReference type="InterPro" id="IPR011701">
    <property type="entry name" value="MFS"/>
</dbReference>
<dbReference type="InterPro" id="IPR020846">
    <property type="entry name" value="MFS_dom"/>
</dbReference>
<dbReference type="InterPro" id="IPR036259">
    <property type="entry name" value="MFS_trans_sf"/>
</dbReference>
<dbReference type="InterPro" id="IPR005829">
    <property type="entry name" value="Sugar_transporter_CS"/>
</dbReference>
<dbReference type="PANTHER" id="PTHR23501">
    <property type="entry name" value="MAJOR FACILITATOR SUPERFAMILY"/>
    <property type="match status" value="1"/>
</dbReference>
<dbReference type="PANTHER" id="PTHR23501:SF191">
    <property type="entry name" value="VACUOLAR BASIC AMINO ACID TRANSPORTER 4"/>
    <property type="match status" value="1"/>
</dbReference>
<dbReference type="Pfam" id="PF07690">
    <property type="entry name" value="MFS_1"/>
    <property type="match status" value="1"/>
</dbReference>
<dbReference type="SUPFAM" id="SSF103473">
    <property type="entry name" value="MFS general substrate transporter"/>
    <property type="match status" value="1"/>
</dbReference>
<dbReference type="PROSITE" id="PS50850">
    <property type="entry name" value="MFS"/>
    <property type="match status" value="1"/>
</dbReference>
<dbReference type="PROSITE" id="PS00216">
    <property type="entry name" value="SUGAR_TRANSPORT_1"/>
    <property type="match status" value="1"/>
</dbReference>
<gene>
    <name evidence="8" type="primary">mfs</name>
    <name type="ordered locus">MSMEG_3069</name>
    <name type="ordered locus">MSMEI_2992</name>
</gene>
<feature type="chain" id="PRO_0000438415" description="Triacylglyceride transporter MSMEG_3069/MSMEI_2992">
    <location>
        <begin position="1"/>
        <end position="560"/>
    </location>
</feature>
<feature type="transmembrane region" description="Helical; Name=TM1" evidence="3">
    <location>
        <begin position="16"/>
        <end position="36"/>
    </location>
</feature>
<feature type="transmembrane region" description="Helical; Name=TM2" evidence="3">
    <location>
        <begin position="48"/>
        <end position="68"/>
    </location>
</feature>
<feature type="transmembrane region" description="Helical; Name=TM3" evidence="3">
    <location>
        <begin position="78"/>
        <end position="98"/>
    </location>
</feature>
<feature type="transmembrane region" description="Helical; Name=TM4" evidence="3">
    <location>
        <begin position="108"/>
        <end position="128"/>
    </location>
</feature>
<feature type="transmembrane region" description="Helical; Name=TM5" evidence="3">
    <location>
        <begin position="143"/>
        <end position="163"/>
    </location>
</feature>
<feature type="transmembrane region" description="Helical; Name=TM6" evidence="3">
    <location>
        <begin position="168"/>
        <end position="188"/>
    </location>
</feature>
<feature type="transmembrane region" description="Helical; Name=TMA" evidence="3">
    <location>
        <begin position="200"/>
        <end position="220"/>
    </location>
</feature>
<feature type="transmembrane region" description="Helical; Name=TMB" evidence="3">
    <location>
        <begin position="229"/>
        <end position="249"/>
    </location>
</feature>
<feature type="transmembrane region" description="Helical; Name=TM7" evidence="3">
    <location>
        <begin position="269"/>
        <end position="289"/>
    </location>
</feature>
<feature type="transmembrane region" description="Helical; Name=TM8" evidence="3">
    <location>
        <begin position="307"/>
        <end position="327"/>
    </location>
</feature>
<feature type="transmembrane region" description="Helical; Name=TM9" evidence="3">
    <location>
        <begin position="336"/>
        <end position="356"/>
    </location>
</feature>
<feature type="transmembrane region" description="Helical; Name=TM10" evidence="3">
    <location>
        <begin position="368"/>
        <end position="388"/>
    </location>
</feature>
<feature type="transmembrane region" description="Helical; Name=TM11" evidence="3">
    <location>
        <begin position="411"/>
        <end position="431"/>
    </location>
</feature>
<feature type="transmembrane region" description="Helical; Name=TM12" evidence="3">
    <location>
        <begin position="477"/>
        <end position="497"/>
    </location>
</feature>
<feature type="region of interest" description="Beta-hairpin" evidence="1">
    <location>
        <begin position="362"/>
        <end position="371"/>
    </location>
</feature>
<feature type="region of interest" description="Disordered" evidence="4">
    <location>
        <begin position="519"/>
        <end position="560"/>
    </location>
</feature>
<feature type="site" description="Protonation/deprotonation site" evidence="1">
    <location>
        <position position="24"/>
    </location>
</feature>
<feature type="site" description="Forms salt bridge with Arg-426, probably closes bottom of cavity" evidence="1">
    <location>
        <position position="146"/>
    </location>
</feature>
<feature type="site" description="Forms salt bridge with Gln-157, probably closes bottom of cavity" evidence="1">
    <location>
        <position position="415"/>
    </location>
</feature>
<feature type="mutagenesis site" description="Does not complement a deletion of this operon for antibiotic resistance." evidence="6">
    <original>D</original>
    <variation>N</variation>
    <location>
        <position position="72"/>
    </location>
</feature>
<sequence>MSSRGNRNIAISAGSLAVLLGALDTYVVITIIVDIMADVGIAINQIQQVTPIITGYLLGYIAAMPLLGRASDRFGRKMLIQVGLAGFAVGSVVTALSSDLTMLVIGRIIQGSASGALLPVTLALAADLWSARSRASVLGGVGAAQELGAVLGPMYGIALVWLFNHWQAVFWVNVPLAVIAMVMIHFSLPARQQVDEPERVDVIGGVLLAIALGLTVVGLYNPEPDGKQVLPSWGLPVLAGALVAAVAFFAWEKVAKTRLIDPAGVRFRPFLAALAASLCAGAALMVTLVNVELFGQGVLGQDQDHAAFLLLRFLIALPIGALIGGWLATRIGDRLVVLIGLLIAAGGFVLISHWSVDVLADRHNLGLFTLPVLDTDLAIVGLGLGLVIGPLTSATLRAVPAAEHGIASAAVVVARMIGMLIGIAALGAWGFYRFNQHLATLAARAAGDAGSPMSLAERLTAQAVRYREAYVMMYGDIFLSAAVVCVIGALLGLLISGKHEHAEEFEPAYAPTYGGGGAIDPYDAGDADDAPTEMLDLPTQVLSAPPSDPGDERPGRHRAP</sequence>
<keyword id="KW-0046">Antibiotic resistance</keyword>
<keyword id="KW-0997">Cell inner membrane</keyword>
<keyword id="KW-1003">Cell membrane</keyword>
<keyword id="KW-0445">Lipid transport</keyword>
<keyword id="KW-0446">Lipid-binding</keyword>
<keyword id="KW-0472">Membrane</keyword>
<keyword id="KW-1185">Reference proteome</keyword>
<keyword id="KW-0812">Transmembrane</keyword>
<keyword id="KW-1133">Transmembrane helix</keyword>
<keyword id="KW-0813">Transport</keyword>
<proteinExistence type="evidence at protein level"/>
<evidence type="ECO:0000250" key="1">
    <source>
        <dbReference type="UniProtKB" id="K5B8L6"/>
    </source>
</evidence>
<evidence type="ECO:0000250" key="2">
    <source>
        <dbReference type="UniProtKB" id="P9WJY3"/>
    </source>
</evidence>
<evidence type="ECO:0000255" key="3"/>
<evidence type="ECO:0000256" key="4">
    <source>
        <dbReference type="SAM" id="MobiDB-lite"/>
    </source>
</evidence>
<evidence type="ECO:0000269" key="5">
    <source>
    </source>
</evidence>
<evidence type="ECO:0000269" key="6">
    <source>
    </source>
</evidence>
<evidence type="ECO:0000303" key="7">
    <source>
    </source>
</evidence>
<evidence type="ECO:0000303" key="8">
    <source>
    </source>
</evidence>
<evidence type="ECO:0000305" key="9"/>
<evidence type="ECO:0000305" key="10">
    <source>
    </source>
</evidence>
<comment type="function">
    <text evidence="1 2 5 6 10">In association with lipoprotein LprG transports triacyglycerides (TAG) across the inner cell membrane into the periplasm; TAG probably regulates lipid metabolism and growth regulation and plays a structural role in the outer membrane (By similarity). TAG (and maybe other lipids) enters the central cavity of the P55 transporter from within the cell inner membrane via clefts on the cytoplasmic face of P55 between TM5-TM8 and TM2-TM11 (By similarity). From there the lipid is probably transferred to the hydrophobic cavity of LprG (By similarity). Confers resistance to ethidium bromide, possibly acting as an efflux pump, requires LprG lipoprotein for normal function (PubMed:18156250). Export of ethidium bromide can be complemented by the equivalent operon from M.tuberculosis (lprG-Rv1410c) (PubMed:18156250). Involved in drug susceptibilty, its expression alone partially complements the antibiotic susceptibilty of a double lprG-mfs deletion (PubMed:30742339). Probably does not function as a bona fide drug efflux pump, but instead plays a role in outer membrane biogenesis (Probable) (PubMed:30742339). Probably required with LprG for normal surface localization of lipoarabinomannan (LAM).</text>
</comment>
<comment type="activity regulation">
    <text evidence="5">Resistance to ethidium bromide is inhibited by reserpine (PubMed:18156250).</text>
</comment>
<comment type="subcellular location">
    <subcellularLocation>
        <location evidence="9">Cell inner membrane</location>
        <topology evidence="1">Multi-pass membrane protein</topology>
    </subcellularLocation>
</comment>
<comment type="induction">
    <text evidence="5 6">Part of the lrpG-MSMEG_3069/MSMEI_2992 operon (PubMed:18156250, PubMed:30742339).</text>
</comment>
<comment type="domain">
    <text evidence="1">Has a canonical major facilitator superfamily fold with two N- and C-terminal domains of 6 transmembrane helices (TM 1-6 and 7-12) and two other transmembrane helices between the domains (TMA and TMB) that form a hairpin. Between TM9-TM10 is a periplasmic beta-hairpin that extends along the membrane plane, TM11 and TM12 helices extend into the periplasm. Asp-24 is a possible protonation/deprotonation site.</text>
</comment>
<comment type="disruption phenotype">
    <text evidence="5 6">Double deletions of lprG-MSMEG_3069/MSMEI_2992 operon are more sensitive to ethidium bromide; restoration of wild-type growth is conferred by the M.tuberculosis operon (PubMed:18156250). Cells display abnormal colony morphology and are defective for sliding motility under carbon-limiting conditions (PubMed:18156250). A double lprG-MSMEG_3069/MSMEI_2992 deletion strain is more sensitive to the antibiotics tetracyline, vancomycin, rifabutin and novobiocin, has a higher mean surface rigidity, and has a cell separation defect (PubMed:30742339).</text>
</comment>
<comment type="similarity">
    <text evidence="9">Belongs to the major facilitator superfamily. P55 (TC 2.A.1.3.34) family.</text>
</comment>
<name>MFS55_MYCS2</name>
<organism>
    <name type="scientific">Mycolicibacterium smegmatis (strain ATCC 700084 / mc(2)155)</name>
    <name type="common">Mycobacterium smegmatis</name>
    <dbReference type="NCBI Taxonomy" id="246196"/>
    <lineage>
        <taxon>Bacteria</taxon>
        <taxon>Bacillati</taxon>
        <taxon>Actinomycetota</taxon>
        <taxon>Actinomycetes</taxon>
        <taxon>Mycobacteriales</taxon>
        <taxon>Mycobacteriaceae</taxon>
        <taxon>Mycolicibacterium</taxon>
    </lineage>
</organism>
<accession>A0QWU7</accession>